<dbReference type="EMBL" id="AL357612">
    <property type="protein sequence ID" value="CAB93724.1"/>
    <property type="molecule type" value="Genomic_DNA"/>
</dbReference>
<dbReference type="EMBL" id="CP002688">
    <property type="protein sequence ID" value="AED91271.1"/>
    <property type="molecule type" value="Genomic_DNA"/>
</dbReference>
<dbReference type="EMBL" id="AK229633">
    <property type="protein sequence ID" value="BAF01478.1"/>
    <property type="molecule type" value="mRNA"/>
</dbReference>
<dbReference type="PIR" id="T50508">
    <property type="entry name" value="T50508"/>
</dbReference>
<dbReference type="RefSeq" id="NP_196440.1">
    <property type="nucleotide sequence ID" value="NM_120906.6"/>
</dbReference>
<dbReference type="SMR" id="Q9LEY4"/>
<dbReference type="FunCoup" id="Q9LEY4">
    <property type="interactions" value="1485"/>
</dbReference>
<dbReference type="STRING" id="3702.Q9LEY4"/>
<dbReference type="iPTMnet" id="Q9LEY4"/>
<dbReference type="PaxDb" id="3702-AT5G08230.1"/>
<dbReference type="ProteomicsDB" id="232121"/>
<dbReference type="EnsemblPlants" id="AT5G08230.1">
    <property type="protein sequence ID" value="AT5G08230.1"/>
    <property type="gene ID" value="AT5G08230"/>
</dbReference>
<dbReference type="GeneID" id="830719"/>
<dbReference type="Gramene" id="AT5G08230.1">
    <property type="protein sequence ID" value="AT5G08230.1"/>
    <property type="gene ID" value="AT5G08230"/>
</dbReference>
<dbReference type="KEGG" id="ath:AT5G08230"/>
<dbReference type="Araport" id="AT5G08230"/>
<dbReference type="TAIR" id="AT5G08230">
    <property type="gene designation" value="HULK1"/>
</dbReference>
<dbReference type="eggNOG" id="KOG1904">
    <property type="taxonomic scope" value="Eukaryota"/>
</dbReference>
<dbReference type="HOGENOM" id="CLU_005040_0_0_1"/>
<dbReference type="InParanoid" id="Q9LEY4"/>
<dbReference type="OMA" id="LQHEYQI"/>
<dbReference type="PhylomeDB" id="Q9LEY4"/>
<dbReference type="PRO" id="PR:Q9LEY4"/>
<dbReference type="Proteomes" id="UP000006548">
    <property type="component" value="Chromosome 5"/>
</dbReference>
<dbReference type="ExpressionAtlas" id="Q9LEY4">
    <property type="expression patterns" value="baseline and differential"/>
</dbReference>
<dbReference type="GO" id="GO:0005634">
    <property type="term" value="C:nucleus"/>
    <property type="evidence" value="ECO:0000314"/>
    <property type="project" value="TAIR"/>
</dbReference>
<dbReference type="GO" id="GO:0009506">
    <property type="term" value="C:plasmodesma"/>
    <property type="evidence" value="ECO:0007005"/>
    <property type="project" value="TAIR"/>
</dbReference>
<dbReference type="GO" id="GO:0009908">
    <property type="term" value="P:flower development"/>
    <property type="evidence" value="ECO:0007669"/>
    <property type="project" value="UniProtKB-KW"/>
</dbReference>
<dbReference type="GO" id="GO:0006397">
    <property type="term" value="P:mRNA processing"/>
    <property type="evidence" value="ECO:0007669"/>
    <property type="project" value="UniProtKB-KW"/>
</dbReference>
<dbReference type="CDD" id="cd20147">
    <property type="entry name" value="PWWP_HULK"/>
    <property type="match status" value="1"/>
</dbReference>
<dbReference type="FunFam" id="1.25.40.90:FF:000037">
    <property type="entry name" value="Enhancer of ag-4 2"/>
    <property type="match status" value="1"/>
</dbReference>
<dbReference type="Gene3D" id="1.25.40.90">
    <property type="match status" value="1"/>
</dbReference>
<dbReference type="Gene3D" id="2.30.30.140">
    <property type="match status" value="1"/>
</dbReference>
<dbReference type="InterPro" id="IPR006569">
    <property type="entry name" value="CID_dom"/>
</dbReference>
<dbReference type="InterPro" id="IPR008942">
    <property type="entry name" value="ENTH_VHS"/>
</dbReference>
<dbReference type="InterPro" id="IPR000313">
    <property type="entry name" value="PWWP_dom"/>
</dbReference>
<dbReference type="PANTHER" id="PTHR12550">
    <property type="entry name" value="HEPATOMA-DERIVED GROWTH FACTOR-RELATED"/>
    <property type="match status" value="1"/>
</dbReference>
<dbReference type="PANTHER" id="PTHR12550:SF77">
    <property type="entry name" value="PROTEIN HUA2-LIKE 1"/>
    <property type="match status" value="1"/>
</dbReference>
<dbReference type="Pfam" id="PF04818">
    <property type="entry name" value="CID"/>
    <property type="match status" value="1"/>
</dbReference>
<dbReference type="Pfam" id="PF00855">
    <property type="entry name" value="PWWP"/>
    <property type="match status" value="1"/>
</dbReference>
<dbReference type="SMART" id="SM00293">
    <property type="entry name" value="PWWP"/>
    <property type="match status" value="1"/>
</dbReference>
<dbReference type="SMART" id="SM00582">
    <property type="entry name" value="RPR"/>
    <property type="match status" value="1"/>
</dbReference>
<dbReference type="SUPFAM" id="SSF63748">
    <property type="entry name" value="Tudor/PWWP/MBT"/>
    <property type="match status" value="1"/>
</dbReference>
<dbReference type="PROSITE" id="PS51391">
    <property type="entry name" value="CID"/>
    <property type="match status" value="1"/>
</dbReference>
<dbReference type="PROSITE" id="PS50812">
    <property type="entry name" value="PWWP"/>
    <property type="match status" value="1"/>
</dbReference>
<evidence type="ECO:0000255" key="1">
    <source>
        <dbReference type="PROSITE-ProRule" id="PRU00162"/>
    </source>
</evidence>
<evidence type="ECO:0000255" key="2">
    <source>
        <dbReference type="PROSITE-ProRule" id="PRU00724"/>
    </source>
</evidence>
<evidence type="ECO:0000256" key="3">
    <source>
        <dbReference type="SAM" id="MobiDB-lite"/>
    </source>
</evidence>
<evidence type="ECO:0000269" key="4">
    <source>
    </source>
</evidence>
<evidence type="ECO:0000303" key="5">
    <source>
    </source>
</evidence>
<evidence type="ECO:0000305" key="6"/>
<evidence type="ECO:0000312" key="7">
    <source>
        <dbReference type="Araport" id="AT5G08230"/>
    </source>
</evidence>
<keyword id="KW-0217">Developmental protein</keyword>
<keyword id="KW-0287">Flowering</keyword>
<keyword id="KW-0507">mRNA processing</keyword>
<keyword id="KW-0539">Nucleus</keyword>
<keyword id="KW-1185">Reference proteome</keyword>
<keyword id="KW-0804">Transcription</keyword>
<keyword id="KW-0805">Transcription regulation</keyword>
<gene>
    <name evidence="5" type="primary">HULK1</name>
    <name evidence="7" type="ordered locus">At5g08230</name>
    <name type="ORF">T22D6_170</name>
</gene>
<protein>
    <recommendedName>
        <fullName evidence="5">Protein HUA2-LIKE 1</fullName>
    </recommendedName>
    <alternativeName>
        <fullName evidence="6">HUA2-like protein 1</fullName>
    </alternativeName>
</protein>
<sequence length="1445" mass="156555">MAPGRKRGANKAMAIGEMRLGDLVLAKVKGFPAWPAKIGQPEDWNQAPDPKKHFVQFYGTGEIGFVTPPDIQPFTSETKKKLSARCQGKTVKYFSQAVEEISAAFEESQKQKSDIVGNEALLNAVEPSVTKPKYLNQASSDGKSDKFSSRADPCLGKLVENNGAEINPDVGEQDSSISNNRNTSPSSEPVEHGSPDPILKVAVDDKIDNVTCTDHSDGTGNNLVNDQRIIRKTTDDSNKRCKDEVRAKRVPDSRAATDNHILGPNQKLKGSIKGQDHGSKKGQDHGCRKESSDSKVVTDLNIASSKKPKELLKEKKKRFENELGKSASGADESKRAAKRPRSEDAKDQKQCKSKRLVPVGEGKAEISDSTGVVSIFKREIVLGISALGGKNQFDKDMVAYTKRRKQTVEHTSVSSFPGSLVKEGANHPEQKISSSSDSDIKVQAAQLPKRRRAVCIYDDDDDDEDPKTPVHGGLSNIPIASTDAPKSANASHNTSIKAKLLAGSTDSVKTGKVPLYKHNKDASLALPDSVEGYNSRMGKPFKALLQKNIKPILRSPKNSYQLVSFKKQVTGQNKTAKVAGAGMPDSVEGPSNSSYMGKPVIKLPPQNVKQTLRSPKKSPQLFSTKELVAVQNKIAKVSGAGIPKKYHGDSSKDVVAGSDRVSSSHSQTANQRSKPAFGEKPTSTPKVATRLDVEVSRDTFVNLSADVIDVNQENGNAPLFSFGMSDSSSSCMKDLIAAAQAKRKQAHSQFSPFVNLDHNSLNIDSMQTSKSPFMVQNVSSPAADATLIVAQEHQEVLTPSNHGRQSSSSNQAGTEENEERRFSSGHRSVGGSLSGATEAAISRDTFEGMIETLSRTKESIRRATRVAIDCAKYGIANEVVELLIRKLEIEPHFPRKVDLFFLLDSIIQSSHSQKGRARSLYIPTVQAALPRLLGAAAPPGTGARENRHQCRKVLRLWLKRKIFPDFLLRRYIGDLGASGDDKTVGFSLRRPSRSERAVDDPLRDMEGMLVDEYGSNANFQLPGYLASLTFGDDEEEDLPSTSQEVKNTHMEVKITHMEEPVLALGKLEAHDSSSDKPHCVVDVNGGLEMEDASCQLKDDVCGIEAKEDSPATTCATELPSFPAGSPPLPHESPPSPPPQPPSSPPPPSSPPQLAPAPPPSDHCLPPPTAPLAPAQSIALPPSSITRPSMPSHPSLPLQPGFAPPAYPLLQHEYQISMQRDHSSIATSNQIAPVPVNAAHGRHADGGVKSEYLMPQSSSFAPVGMCSYGEPLPFISSKQLEYGNSDVLFKQEASSQNQQLRPINTSFLQRPMIRNLAPAPSSHFPLPCRIVQSEPQRSSFPHPYHFPSQPVDGRQHMNEEWRMPPNGCSADPQYGAWIGVRNPFPGSRTVTDGVFQPPPERPPSGTVRYQLAANNLQGGSTISGNIASQMLLSRPDVPSAAQYRPS</sequence>
<comment type="function">
    <text evidence="4">Probable transcription factor that acts with partial redundancy with HULK2 and HULK3. Plays diverse and essential roles in the control of plant development, physiology and flowering time.</text>
</comment>
<comment type="subcellular location">
    <subcellularLocation>
        <location evidence="4">Nucleus</location>
    </subcellularLocation>
</comment>
<comment type="tissue specificity">
    <text evidence="4">Expressed throughout young primordia, and vegetative and reproductive apices.</text>
</comment>
<comment type="disruption phenotype">
    <text evidence="4">No visible phenotype under normal growth conditions, but the triple mutant plants hulk1, hulk2 and hulk3 show delayed flowering.</text>
</comment>
<proteinExistence type="evidence at transcript level"/>
<reference key="1">
    <citation type="journal article" date="2000" name="Nature">
        <title>Sequence and analysis of chromosome 5 of the plant Arabidopsis thaliana.</title>
        <authorList>
            <person name="Tabata S."/>
            <person name="Kaneko T."/>
            <person name="Nakamura Y."/>
            <person name="Kotani H."/>
            <person name="Kato T."/>
            <person name="Asamizu E."/>
            <person name="Miyajima N."/>
            <person name="Sasamoto S."/>
            <person name="Kimura T."/>
            <person name="Hosouchi T."/>
            <person name="Kawashima K."/>
            <person name="Kohara M."/>
            <person name="Matsumoto M."/>
            <person name="Matsuno A."/>
            <person name="Muraki A."/>
            <person name="Nakayama S."/>
            <person name="Nakazaki N."/>
            <person name="Naruo K."/>
            <person name="Okumura S."/>
            <person name="Shinpo S."/>
            <person name="Takeuchi C."/>
            <person name="Wada T."/>
            <person name="Watanabe A."/>
            <person name="Yamada M."/>
            <person name="Yasuda M."/>
            <person name="Sato S."/>
            <person name="de la Bastide M."/>
            <person name="Huang E."/>
            <person name="Spiegel L."/>
            <person name="Gnoj L."/>
            <person name="O'Shaughnessy A."/>
            <person name="Preston R."/>
            <person name="Habermann K."/>
            <person name="Murray J."/>
            <person name="Johnson D."/>
            <person name="Rohlfing T."/>
            <person name="Nelson J."/>
            <person name="Stoneking T."/>
            <person name="Pepin K."/>
            <person name="Spieth J."/>
            <person name="Sekhon M."/>
            <person name="Armstrong J."/>
            <person name="Becker M."/>
            <person name="Belter E."/>
            <person name="Cordum H."/>
            <person name="Cordes M."/>
            <person name="Courtney L."/>
            <person name="Courtney W."/>
            <person name="Dante M."/>
            <person name="Du H."/>
            <person name="Edwards J."/>
            <person name="Fryman J."/>
            <person name="Haakensen B."/>
            <person name="Lamar E."/>
            <person name="Latreille P."/>
            <person name="Leonard S."/>
            <person name="Meyer R."/>
            <person name="Mulvaney E."/>
            <person name="Ozersky P."/>
            <person name="Riley A."/>
            <person name="Strowmatt C."/>
            <person name="Wagner-McPherson C."/>
            <person name="Wollam A."/>
            <person name="Yoakum M."/>
            <person name="Bell M."/>
            <person name="Dedhia N."/>
            <person name="Parnell L."/>
            <person name="Shah R."/>
            <person name="Rodriguez M."/>
            <person name="Hoon See L."/>
            <person name="Vil D."/>
            <person name="Baker J."/>
            <person name="Kirchoff K."/>
            <person name="Toth K."/>
            <person name="King L."/>
            <person name="Bahret A."/>
            <person name="Miller B."/>
            <person name="Marra M.A."/>
            <person name="Martienssen R."/>
            <person name="McCombie W.R."/>
            <person name="Wilson R.K."/>
            <person name="Murphy G."/>
            <person name="Bancroft I."/>
            <person name="Volckaert G."/>
            <person name="Wambutt R."/>
            <person name="Duesterhoeft A."/>
            <person name="Stiekema W."/>
            <person name="Pohl T."/>
            <person name="Entian K.-D."/>
            <person name="Terryn N."/>
            <person name="Hartley N."/>
            <person name="Bent E."/>
            <person name="Johnson S."/>
            <person name="Langham S.-A."/>
            <person name="McCullagh B."/>
            <person name="Robben J."/>
            <person name="Grymonprez B."/>
            <person name="Zimmermann W."/>
            <person name="Ramsperger U."/>
            <person name="Wedler H."/>
            <person name="Balke K."/>
            <person name="Wedler E."/>
            <person name="Peters S."/>
            <person name="van Staveren M."/>
            <person name="Dirkse W."/>
            <person name="Mooijman P."/>
            <person name="Klein Lankhorst R."/>
            <person name="Weitzenegger T."/>
            <person name="Bothe G."/>
            <person name="Rose M."/>
            <person name="Hauf J."/>
            <person name="Berneiser S."/>
            <person name="Hempel S."/>
            <person name="Feldpausch M."/>
            <person name="Lamberth S."/>
            <person name="Villarroel R."/>
            <person name="Gielen J."/>
            <person name="Ardiles W."/>
            <person name="Bents O."/>
            <person name="Lemcke K."/>
            <person name="Kolesov G."/>
            <person name="Mayer K.F.X."/>
            <person name="Rudd S."/>
            <person name="Schoof H."/>
            <person name="Schueller C."/>
            <person name="Zaccaria P."/>
            <person name="Mewes H.-W."/>
            <person name="Bevan M."/>
            <person name="Fransz P.F."/>
        </authorList>
    </citation>
    <scope>NUCLEOTIDE SEQUENCE [LARGE SCALE GENOMIC DNA]</scope>
    <source>
        <strain>cv. Columbia</strain>
    </source>
</reference>
<reference key="2">
    <citation type="journal article" date="2017" name="Plant J.">
        <title>Araport11: a complete reannotation of the Arabidopsis thaliana reference genome.</title>
        <authorList>
            <person name="Cheng C.Y."/>
            <person name="Krishnakumar V."/>
            <person name="Chan A.P."/>
            <person name="Thibaud-Nissen F."/>
            <person name="Schobel S."/>
            <person name="Town C.D."/>
        </authorList>
    </citation>
    <scope>GENOME REANNOTATION</scope>
    <source>
        <strain>cv. Columbia</strain>
    </source>
</reference>
<reference key="3">
    <citation type="submission" date="2006-07" db="EMBL/GenBank/DDBJ databases">
        <title>Large-scale analysis of RIKEN Arabidopsis full-length (RAFL) cDNAs.</title>
        <authorList>
            <person name="Totoki Y."/>
            <person name="Seki M."/>
            <person name="Ishida J."/>
            <person name="Nakajima M."/>
            <person name="Enju A."/>
            <person name="Kamiya A."/>
            <person name="Narusaka M."/>
            <person name="Shin-i T."/>
            <person name="Nakagawa M."/>
            <person name="Sakamoto N."/>
            <person name="Oishi K."/>
            <person name="Kohara Y."/>
            <person name="Kobayashi M."/>
            <person name="Toyoda A."/>
            <person name="Sakaki Y."/>
            <person name="Sakurai T."/>
            <person name="Iida K."/>
            <person name="Akiyama K."/>
            <person name="Satou M."/>
            <person name="Toyoda T."/>
            <person name="Konagaya A."/>
            <person name="Carninci P."/>
            <person name="Kawai J."/>
            <person name="Hayashizaki Y."/>
            <person name="Shinozaki K."/>
        </authorList>
    </citation>
    <scope>NUCLEOTIDE SEQUENCE [LARGE SCALE MRNA] OF 1317-1445</scope>
    <source>
        <strain>cv. Columbia</strain>
    </source>
</reference>
<reference key="4">
    <citation type="journal article" date="2014" name="Plant J.">
        <title>A plant-specific HUA2-LIKE (HULK) gene family in Arabidopsis thaliana is essential for development.</title>
        <authorList>
            <person name="Jali S.S."/>
            <person name="Rosloski S.M."/>
            <person name="Janakirama P."/>
            <person name="Steffen J.G."/>
            <person name="Zhurov V."/>
            <person name="Berleth T."/>
            <person name="Clark R.M."/>
            <person name="Grbic V."/>
        </authorList>
    </citation>
    <scope>FUNCTION</scope>
    <scope>SUBCELLULAR LOCATION</scope>
    <scope>TISSUE SPECIFICITY</scope>
    <scope>DISRUPTION PHENOTYPE</scope>
</reference>
<name>HUAL1_ARATH</name>
<organism>
    <name type="scientific">Arabidopsis thaliana</name>
    <name type="common">Mouse-ear cress</name>
    <dbReference type="NCBI Taxonomy" id="3702"/>
    <lineage>
        <taxon>Eukaryota</taxon>
        <taxon>Viridiplantae</taxon>
        <taxon>Streptophyta</taxon>
        <taxon>Embryophyta</taxon>
        <taxon>Tracheophyta</taxon>
        <taxon>Spermatophyta</taxon>
        <taxon>Magnoliopsida</taxon>
        <taxon>eudicotyledons</taxon>
        <taxon>Gunneridae</taxon>
        <taxon>Pentapetalae</taxon>
        <taxon>rosids</taxon>
        <taxon>malvids</taxon>
        <taxon>Brassicales</taxon>
        <taxon>Brassicaceae</taxon>
        <taxon>Camelineae</taxon>
        <taxon>Arabidopsis</taxon>
    </lineage>
</organism>
<accession>Q9LEY4</accession>
<accession>Q0WN22</accession>
<feature type="chain" id="PRO_0000418857" description="Protein HUA2-LIKE 1">
    <location>
        <begin position="1"/>
        <end position="1445"/>
    </location>
</feature>
<feature type="domain" description="PWWP" evidence="1">
    <location>
        <begin position="20"/>
        <end position="77"/>
    </location>
</feature>
<feature type="domain" description="CID" evidence="2">
    <location>
        <begin position="838"/>
        <end position="979"/>
    </location>
</feature>
<feature type="region of interest" description="Disordered" evidence="3">
    <location>
        <begin position="133"/>
        <end position="197"/>
    </location>
</feature>
<feature type="region of interest" description="Disordered" evidence="3">
    <location>
        <begin position="211"/>
        <end position="302"/>
    </location>
</feature>
<feature type="region of interest" description="Disordered" evidence="3">
    <location>
        <begin position="319"/>
        <end position="356"/>
    </location>
</feature>
<feature type="region of interest" description="Disordered" evidence="3">
    <location>
        <begin position="409"/>
        <end position="439"/>
    </location>
</feature>
<feature type="region of interest" description="Disordered" evidence="3">
    <location>
        <begin position="460"/>
        <end position="491"/>
    </location>
</feature>
<feature type="region of interest" description="Disordered" evidence="3">
    <location>
        <begin position="641"/>
        <end position="685"/>
    </location>
</feature>
<feature type="region of interest" description="Disordered" evidence="3">
    <location>
        <begin position="797"/>
        <end position="835"/>
    </location>
</feature>
<feature type="region of interest" description="Disordered" evidence="3">
    <location>
        <begin position="1110"/>
        <end position="1203"/>
    </location>
</feature>
<feature type="compositionally biased region" description="Polar residues" evidence="3">
    <location>
        <begin position="173"/>
        <end position="187"/>
    </location>
</feature>
<feature type="compositionally biased region" description="Polar residues" evidence="3">
    <location>
        <begin position="211"/>
        <end position="225"/>
    </location>
</feature>
<feature type="compositionally biased region" description="Basic and acidic residues" evidence="3">
    <location>
        <begin position="228"/>
        <end position="257"/>
    </location>
</feature>
<feature type="compositionally biased region" description="Basic and acidic residues" evidence="3">
    <location>
        <begin position="274"/>
        <end position="293"/>
    </location>
</feature>
<feature type="compositionally biased region" description="Basic and acidic residues" evidence="3">
    <location>
        <begin position="331"/>
        <end position="350"/>
    </location>
</feature>
<feature type="compositionally biased region" description="Polar residues" evidence="3">
    <location>
        <begin position="660"/>
        <end position="673"/>
    </location>
</feature>
<feature type="compositionally biased region" description="Polar residues" evidence="3">
    <location>
        <begin position="797"/>
        <end position="814"/>
    </location>
</feature>
<feature type="compositionally biased region" description="Pro residues" evidence="3">
    <location>
        <begin position="1124"/>
        <end position="1170"/>
    </location>
</feature>